<reference key="1">
    <citation type="submission" date="2007-11" db="EMBL/GenBank/DDBJ databases">
        <title>The genome sequence of the hyperthermophilic bacterium Thermotoga neapolitana.</title>
        <authorList>
            <person name="Lim S.K."/>
            <person name="Kim J.S."/>
            <person name="Cha S.H."/>
            <person name="Park B.C."/>
            <person name="Lee D.S."/>
            <person name="Tae H.S."/>
            <person name="Kim S.-J."/>
            <person name="Kim J.J."/>
            <person name="Park K.J."/>
            <person name="Lee S.Y."/>
        </authorList>
    </citation>
    <scope>NUCLEOTIDE SEQUENCE [LARGE SCALE GENOMIC DNA]</scope>
    <source>
        <strain>ATCC 49049 / DSM 4359 / NBRC 107923 / NS-E</strain>
    </source>
</reference>
<gene>
    <name type="ordered locus">CTN_1882</name>
</gene>
<protein>
    <recommendedName>
        <fullName evidence="1">CinA-like protein</fullName>
    </recommendedName>
</protein>
<accession>B9KAS5</accession>
<evidence type="ECO:0000255" key="1">
    <source>
        <dbReference type="HAMAP-Rule" id="MF_00226"/>
    </source>
</evidence>
<name>CINAL_THENN</name>
<feature type="chain" id="PRO_1000124996" description="CinA-like protein">
    <location>
        <begin position="1"/>
        <end position="408"/>
    </location>
</feature>
<comment type="similarity">
    <text evidence="1">Belongs to the CinA family.</text>
</comment>
<organism>
    <name type="scientific">Thermotoga neapolitana (strain ATCC 49049 / DSM 4359 / NBRC 107923 / NS-E)</name>
    <dbReference type="NCBI Taxonomy" id="309803"/>
    <lineage>
        <taxon>Bacteria</taxon>
        <taxon>Thermotogati</taxon>
        <taxon>Thermotogota</taxon>
        <taxon>Thermotogae</taxon>
        <taxon>Thermotogales</taxon>
        <taxon>Thermotogaceae</taxon>
        <taxon>Thermotoga</taxon>
    </lineage>
</organism>
<proteinExistence type="inferred from homology"/>
<dbReference type="EMBL" id="CP000916">
    <property type="protein sequence ID" value="ACM24058.1"/>
    <property type="molecule type" value="Genomic_DNA"/>
</dbReference>
<dbReference type="RefSeq" id="WP_015920294.1">
    <property type="nucleotide sequence ID" value="NC_011978.1"/>
</dbReference>
<dbReference type="SMR" id="B9KAS5"/>
<dbReference type="STRING" id="309803.CTN_1882"/>
<dbReference type="KEGG" id="tna:CTN_1882"/>
<dbReference type="eggNOG" id="COG1058">
    <property type="taxonomic scope" value="Bacteria"/>
</dbReference>
<dbReference type="eggNOG" id="COG1546">
    <property type="taxonomic scope" value="Bacteria"/>
</dbReference>
<dbReference type="HOGENOM" id="CLU_030805_9_3_0"/>
<dbReference type="Proteomes" id="UP000000445">
    <property type="component" value="Chromosome"/>
</dbReference>
<dbReference type="CDD" id="cd00885">
    <property type="entry name" value="cinA"/>
    <property type="match status" value="1"/>
</dbReference>
<dbReference type="Gene3D" id="3.30.70.2860">
    <property type="match status" value="1"/>
</dbReference>
<dbReference type="Gene3D" id="3.90.950.20">
    <property type="entry name" value="CinA-like"/>
    <property type="match status" value="1"/>
</dbReference>
<dbReference type="Gene3D" id="3.40.980.10">
    <property type="entry name" value="MoaB/Mog-like domain"/>
    <property type="match status" value="1"/>
</dbReference>
<dbReference type="HAMAP" id="MF_00226_B">
    <property type="entry name" value="CinA_B"/>
    <property type="match status" value="1"/>
</dbReference>
<dbReference type="InterPro" id="IPR050101">
    <property type="entry name" value="CinA"/>
</dbReference>
<dbReference type="InterPro" id="IPR036653">
    <property type="entry name" value="CinA-like_C"/>
</dbReference>
<dbReference type="InterPro" id="IPR008136">
    <property type="entry name" value="CinA_C"/>
</dbReference>
<dbReference type="InterPro" id="IPR041424">
    <property type="entry name" value="CinA_KH"/>
</dbReference>
<dbReference type="InterPro" id="IPR008135">
    <property type="entry name" value="Competence-induced_CinA"/>
</dbReference>
<dbReference type="InterPro" id="IPR036425">
    <property type="entry name" value="MoaB/Mog-like_dom_sf"/>
</dbReference>
<dbReference type="InterPro" id="IPR001453">
    <property type="entry name" value="MoaB/Mog_dom"/>
</dbReference>
<dbReference type="NCBIfam" id="TIGR00200">
    <property type="entry name" value="cinA_nterm"/>
    <property type="match status" value="1"/>
</dbReference>
<dbReference type="NCBIfam" id="TIGR00177">
    <property type="entry name" value="molyb_syn"/>
    <property type="match status" value="1"/>
</dbReference>
<dbReference type="NCBIfam" id="TIGR00199">
    <property type="entry name" value="PncC_domain"/>
    <property type="match status" value="1"/>
</dbReference>
<dbReference type="NCBIfam" id="NF001813">
    <property type="entry name" value="PRK00549.1"/>
    <property type="match status" value="1"/>
</dbReference>
<dbReference type="PANTHER" id="PTHR13939">
    <property type="entry name" value="NICOTINAMIDE-NUCLEOTIDE AMIDOHYDROLASE PNCC"/>
    <property type="match status" value="1"/>
</dbReference>
<dbReference type="PANTHER" id="PTHR13939:SF0">
    <property type="entry name" value="NMN AMIDOHYDROLASE-LIKE PROTEIN YFAY"/>
    <property type="match status" value="1"/>
</dbReference>
<dbReference type="Pfam" id="PF02464">
    <property type="entry name" value="CinA"/>
    <property type="match status" value="1"/>
</dbReference>
<dbReference type="Pfam" id="PF18146">
    <property type="entry name" value="CinA_KH"/>
    <property type="match status" value="1"/>
</dbReference>
<dbReference type="Pfam" id="PF00994">
    <property type="entry name" value="MoCF_biosynth"/>
    <property type="match status" value="1"/>
</dbReference>
<dbReference type="PIRSF" id="PIRSF006728">
    <property type="entry name" value="CinA"/>
    <property type="match status" value="1"/>
</dbReference>
<dbReference type="SMART" id="SM00852">
    <property type="entry name" value="MoCF_biosynth"/>
    <property type="match status" value="1"/>
</dbReference>
<dbReference type="SUPFAM" id="SSF142433">
    <property type="entry name" value="CinA-like"/>
    <property type="match status" value="1"/>
</dbReference>
<dbReference type="SUPFAM" id="SSF53218">
    <property type="entry name" value="Molybdenum cofactor biosynthesis proteins"/>
    <property type="match status" value="1"/>
</dbReference>
<sequence length="408" mass="45165">MKKAAIITVGSELLEGLILNRNAQFLCQELKNLGYRVIKVSTVGDHLEDIAEEVRSLLPEVHLLILTGGLGPTKDDLTREAVAKALNRKLLLDYNLKTKIEEKVKKYHSKIPSNIEKQALVIEGAKVIDNPVGSAPGQLLEVDGKKVILLPGPPKELIPMFESLKELLKTPHAFYQVVLKYYSIPEAVLEDLLKEILYSQDRVEVATMADHVEGVRLRLTTSAEHREFLDELVEKILEKTGEYLYGMNDEKMEEVVVRLLKENKKTLAVAESCTGGMLSSLVVNVPGASDVFIGGVVAYSNELKKSILGVKEDTLRKYGAVSEQCVQEMTEGLKKLTEADICVAISGIAGPSGGTPTKPVGTVFIDLFEQNHSTVRYNFSGDRNTIRTRSAMMALENLRKHLKERGRS</sequence>